<feature type="chain" id="PRO_0000222634" description="Coat protein">
    <location>
        <begin position="1"/>
        <end position="212"/>
    </location>
</feature>
<organismHost>
    <name type="scientific">Chenopodium album</name>
    <name type="common">Fat hen</name>
    <dbReference type="NCBI Taxonomy" id="3559"/>
</organismHost>
<organismHost>
    <name type="scientific">Malus pumila</name>
    <name type="common">Paradise apple</name>
    <dbReference type="NCBI Taxonomy" id="283210"/>
</organismHost>
<organismHost>
    <name type="scientific">Medicago sativa</name>
    <name type="common">Alfalfa</name>
    <dbReference type="NCBI Taxonomy" id="3879"/>
</organismHost>
<organismHost>
    <name type="scientific">Pisum sativum</name>
    <name type="common">Garden pea</name>
    <name type="synonym">Lathyrus oleraceus</name>
    <dbReference type="NCBI Taxonomy" id="3888"/>
</organismHost>
<organismHost>
    <name type="scientific">Stellaria media</name>
    <name type="common">Common chickweed</name>
    <name type="synonym">Alsine media</name>
    <dbReference type="NCBI Taxonomy" id="13274"/>
</organismHost>
<organismHost>
    <name type="scientific">Trifolium</name>
    <dbReference type="NCBI Taxonomy" id="3898"/>
</organismHost>
<organismHost>
    <name type="scientific">Vicia sativa</name>
    <name type="common">Spring vetch</name>
    <name type="synonym">Tare</name>
    <dbReference type="NCBI Taxonomy" id="3908"/>
</organismHost>
<name>CAPSD_CYMV</name>
<keyword id="KW-0167">Capsid protein</keyword>
<keyword id="KW-1139">Helical capsid protein</keyword>
<keyword id="KW-0687">Ribonucleoprotein</keyword>
<keyword id="KW-0946">Virion</keyword>
<evidence type="ECO:0000305" key="1"/>
<protein>
    <recommendedName>
        <fullName>Coat protein</fullName>
    </recommendedName>
    <alternativeName>
        <fullName>Capsid protein</fullName>
        <shortName>CP</shortName>
    </alternativeName>
</protein>
<organism>
    <name type="scientific">Clover yellow mosaic virus</name>
    <name type="common">CYMV</name>
    <dbReference type="NCBI Taxonomy" id="12177"/>
    <lineage>
        <taxon>Viruses</taxon>
        <taxon>Riboviria</taxon>
        <taxon>Orthornavirae</taxon>
        <taxon>Kitrinoviricota</taxon>
        <taxon>Alsuviricetes</taxon>
        <taxon>Tymovirales</taxon>
        <taxon>Alphaflexiviridae</taxon>
        <taxon>Potexvirus</taxon>
    </lineage>
</organism>
<comment type="function">
    <text>Required for genome encapsidation. Forms ribonucleoprotein complexes along with TGB1 helicase and viral RNA.</text>
</comment>
<comment type="subcellular location">
    <subcellularLocation>
        <location evidence="1">Virion</location>
    </subcellularLocation>
</comment>
<comment type="similarity">
    <text evidence="1">Belongs to the potexvirus capsid protein family.</text>
</comment>
<sequence>MTDTKKTLFSAPTDEQLDTLTLTIESNLVPSISELEAIAKDWKTLGLQEADFTANAIKIAWFCYHSGSSESVQVQGNSTSDKIPLYQLAGVVRQHSTLRRFCRYFAKVIWNYALRKNQPPANWASQNYKEADRFAAFDFFEGVSSSAALSPPGGLIREPSPNERMANETNKNVHLYQTASRGSNLATTSTVATKGAYSTNASNAGFPYHRPE</sequence>
<accession>P16486</accession>
<accession>P16484</accession>
<reference key="1">
    <citation type="journal article" date="1989" name="J. Gen. Virol.">
        <title>Nucleotide sequence of the 3'-terminal region of clover yellow mosaic virus RNA.</title>
        <authorList>
            <person name="Abouhaidar M.G."/>
            <person name="Lai R."/>
        </authorList>
    </citation>
    <scope>NUCLEOTIDE SEQUENCE [GENOMIC RNA]</scope>
</reference>
<reference key="2">
    <citation type="journal article" date="2005" name="Mol. Plant Microbe Interact.">
        <title>A new cell-to-cell transport model for Potexviruses.</title>
        <authorList>
            <person name="Verchot-Lubicz J."/>
        </authorList>
    </citation>
    <scope>REVIEW</scope>
</reference>
<dbReference type="EMBL" id="D00485">
    <property type="protein sequence ID" value="BAA00375.1"/>
    <property type="molecule type" value="Genomic_RNA"/>
</dbReference>
<dbReference type="RefSeq" id="NP_077083.1">
    <property type="nucleotide sequence ID" value="NC_001753.1"/>
</dbReference>
<dbReference type="SMR" id="P16486"/>
<dbReference type="GeneID" id="1494004"/>
<dbReference type="KEGG" id="vg:1494004"/>
<dbReference type="OrthoDB" id="15901at10239"/>
<dbReference type="GO" id="GO:0019029">
    <property type="term" value="C:helical viral capsid"/>
    <property type="evidence" value="ECO:0007669"/>
    <property type="project" value="UniProtKB-KW"/>
</dbReference>
<dbReference type="GO" id="GO:1990904">
    <property type="term" value="C:ribonucleoprotein complex"/>
    <property type="evidence" value="ECO:0007669"/>
    <property type="project" value="UniProtKB-KW"/>
</dbReference>
<dbReference type="GO" id="GO:0005198">
    <property type="term" value="F:structural molecule activity"/>
    <property type="evidence" value="ECO:0007669"/>
    <property type="project" value="InterPro"/>
</dbReference>
<dbReference type="InterPro" id="IPR000052">
    <property type="entry name" value="Pltvir_coat"/>
</dbReference>
<dbReference type="Pfam" id="PF00286">
    <property type="entry name" value="Flexi_CP"/>
    <property type="match status" value="1"/>
</dbReference>
<dbReference type="PRINTS" id="PR00232">
    <property type="entry name" value="POTXCARLCOAT"/>
</dbReference>
<dbReference type="PROSITE" id="PS00418">
    <property type="entry name" value="POTEX_CARLAVIRUS_COAT"/>
    <property type="match status" value="1"/>
</dbReference>
<proteinExistence type="inferred from homology"/>